<keyword id="KW-0010">Activator</keyword>
<keyword id="KW-0025">Alternative splicing</keyword>
<keyword id="KW-0903">Direct protein sequencing</keyword>
<keyword id="KW-0225">Disease variant</keyword>
<keyword id="KW-0242">Dwarfism</keyword>
<keyword id="KW-0991">Intellectual disability</keyword>
<keyword id="KW-0479">Metal-binding</keyword>
<keyword id="KW-0539">Nucleus</keyword>
<keyword id="KW-0597">Phosphoprotein</keyword>
<keyword id="KW-1267">Proteomics identification</keyword>
<keyword id="KW-1185">Reference proteome</keyword>
<keyword id="KW-0677">Repeat</keyword>
<keyword id="KW-0804">Transcription</keyword>
<keyword id="KW-0805">Transcription regulation</keyword>
<keyword id="KW-0862">Zinc</keyword>
<keyword id="KW-0863">Zinc-finger</keyword>
<comment type="function">
    <text>General activator of RNA polymerase which utilizes different TFIIIB complexes at structurally distinct promoters. The isoform 1 is involved in the transcription of tRNA, adenovirus VA1, 7SL and 5S RNA. Isoform 2 is required for transcription of the U6 promoter.</text>
</comment>
<comment type="subunit">
    <text evidence="4 6">TFIIIB comprises at least the TATA-binding protein (TBP) and the B-related factor 1 (BRF1/TFIIIB90). Interacts with BDP1 (PubMed:14592981). Interacts with MAF1 (PubMed:18377933).</text>
</comment>
<comment type="interaction">
    <interactant intactId="EBI-949861">
        <id>Q92994</id>
    </interactant>
    <interactant intactId="EBI-355371">
        <id>P20226</id>
        <label>TBP</label>
    </interactant>
    <organismsDiffer>false</organismsDiffer>
    <experiments>3</experiments>
</comment>
<comment type="subcellular location">
    <subcellularLocation>
        <location evidence="1">Nucleus</location>
    </subcellularLocation>
</comment>
<comment type="alternative products">
    <event type="alternative splicing"/>
    <isoform>
        <id>Q92994-1</id>
        <name>1</name>
        <name>hBRF1</name>
        <sequence type="displayed"/>
    </isoform>
    <isoform>
        <id>Q92994-2</id>
        <name>2</name>
        <name>hBRF2</name>
        <sequence type="described" ref="VSP_006396 VSP_006397 VSP_006398"/>
    </isoform>
    <isoform>
        <id>Q92994-3</id>
        <name>3</name>
        <name>hBRF3</name>
        <sequence type="described" ref="VSP_006396"/>
    </isoform>
    <isoform>
        <id>Q92994-4</id>
        <name>4</name>
        <name>hBRF4</name>
        <sequence type="described" ref="VSP_006399 VSP_006400"/>
    </isoform>
    <isoform>
        <id>Q92994-5</id>
        <name>5</name>
        <sequence type="described" ref="VSP_014697"/>
    </isoform>
    <isoform>
        <id>Q92994-6</id>
        <name>6</name>
        <sequence type="described" ref="VSP_043835 VSP_043836"/>
    </isoform>
    <isoform>
        <id>Q92994-7</id>
        <name>7</name>
        <sequence type="described" ref="VSP_044244"/>
    </isoform>
    <isoform>
        <id>Q92994-8</id>
        <name>8</name>
        <sequence type="described" ref="VSP_044244 VSP_045046"/>
    </isoform>
    <isoform>
        <id>Q92994-9</id>
        <name>9</name>
        <sequence type="described" ref="VSP_045045"/>
    </isoform>
</comment>
<comment type="disease" evidence="7">
    <disease id="DI-04315">
        <name>Cerebellofaciodental syndrome</name>
        <acronym>CFDS</acronym>
        <description>An autosomal recessive disorder characterized by cerebellar hypoplasia, delayed development and intellectual disability, as well as facial dysmorphic features, short stature, microcephaly, and dental anomalies.</description>
        <dbReference type="MIM" id="616202"/>
    </disease>
    <text>The disease is caused by variants affecting the gene represented in this entry.</text>
</comment>
<comment type="similarity">
    <text evidence="11">Belongs to the TFIIB family.</text>
</comment>
<comment type="sequence caution" evidence="11">
    <conflict type="frameshift">
        <sequence resource="EMBL-CDS" id="AAC50170"/>
    </conflict>
</comment>
<accession>Q92994</accession>
<accession>B3KU36</accession>
<accession>B4DIG5</accession>
<accession>B7Z2N3</accession>
<accession>F5H5Z7</accession>
<accession>F8WA46</accession>
<accession>Q13223</accession>
<accession>Q3SYD9</accession>
<accession>Q5PR24</accession>
<accession>Q6IQ02</accession>
<accession>Q96KX3</accession>
<accession>Q9HCW6</accession>
<accession>Q9HCW7</accession>
<accession>Q9HCW8</accession>
<proteinExistence type="evidence at protein level"/>
<feature type="chain" id="PRO_0000119347" description="Transcription factor IIIB 90 kDa subunit">
    <location>
        <begin position="1"/>
        <end position="677"/>
    </location>
</feature>
<feature type="repeat" description="1">
    <location>
        <begin position="91"/>
        <end position="172"/>
    </location>
</feature>
<feature type="repeat" description="2">
    <location>
        <begin position="185"/>
        <end position="269"/>
    </location>
</feature>
<feature type="zinc finger region" description="TFIIB-type" evidence="2">
    <location>
        <begin position="2"/>
        <end position="33"/>
    </location>
</feature>
<feature type="region of interest" description="Disordered" evidence="3">
    <location>
        <begin position="340"/>
        <end position="368"/>
    </location>
</feature>
<feature type="region of interest" description="Disordered" evidence="3">
    <location>
        <begin position="385"/>
        <end position="413"/>
    </location>
</feature>
<feature type="region of interest" description="Disordered" evidence="3">
    <location>
        <begin position="501"/>
        <end position="521"/>
    </location>
</feature>
<feature type="region of interest" description="Disordered" evidence="3">
    <location>
        <begin position="544"/>
        <end position="653"/>
    </location>
</feature>
<feature type="compositionally biased region" description="Acidic residues" evidence="3">
    <location>
        <begin position="640"/>
        <end position="653"/>
    </location>
</feature>
<feature type="binding site" evidence="2">
    <location>
        <position position="6"/>
    </location>
    <ligand>
        <name>Zn(2+)</name>
        <dbReference type="ChEBI" id="CHEBI:29105"/>
    </ligand>
</feature>
<feature type="binding site" evidence="2">
    <location>
        <position position="9"/>
    </location>
    <ligand>
        <name>Zn(2+)</name>
        <dbReference type="ChEBI" id="CHEBI:29105"/>
    </ligand>
</feature>
<feature type="binding site" evidence="2">
    <location>
        <position position="25"/>
    </location>
    <ligand>
        <name>Zn(2+)</name>
        <dbReference type="ChEBI" id="CHEBI:29105"/>
    </ligand>
</feature>
<feature type="binding site" evidence="2">
    <location>
        <position position="28"/>
    </location>
    <ligand>
        <name>Zn(2+)</name>
        <dbReference type="ChEBI" id="CHEBI:29105"/>
    </ligand>
</feature>
<feature type="modified residue" description="Phosphothreonine" evidence="13 14">
    <location>
        <position position="365"/>
    </location>
</feature>
<feature type="modified residue" description="Phosphoserine" evidence="13">
    <location>
        <position position="450"/>
    </location>
</feature>
<feature type="modified residue" description="Phosphoserine" evidence="12 15 16">
    <location>
        <position position="553"/>
    </location>
</feature>
<feature type="splice variant" id="VSP_045045" description="In isoform 9." evidence="9">
    <location>
        <begin position="1"/>
        <end position="238"/>
    </location>
</feature>
<feature type="splice variant" id="VSP_006396" description="In isoform 2 and isoform 3." evidence="8 10">
    <location>
        <begin position="1"/>
        <end position="204"/>
    </location>
</feature>
<feature type="splice variant" id="VSP_044244" description="In isoform 7 and isoform 8." evidence="9">
    <location>
        <begin position="1"/>
        <end position="115"/>
    </location>
</feature>
<feature type="splice variant" id="VSP_014697" description="In isoform 5." evidence="10">
    <location>
        <begin position="63"/>
        <end position="89"/>
    </location>
</feature>
<feature type="splice variant" id="VSP_006399" description="In isoform 4." evidence="8">
    <original>NVYVLGKTFLLLARELCINAPAIDPCLYIPRFAHLLEFGEKNHEVSMTALRLLQRMKRDWMHTGRRPSGLCGAALLVAARMHDF</original>
    <variation>DSLRPASFPTWGCDLGVVTRVVTGVYPRCASRISVAGLCCLPSQEVLVCRMRGLHDMGVTVRDLWECGSPWQEGHLPMLGTVGC</variation>
    <location>
        <begin position="159"/>
        <end position="242"/>
    </location>
</feature>
<feature type="splice variant" id="VSP_043835" description="In isoform 6." evidence="10">
    <original>NVYVLGKTFLLLARELCINAPAIDPCLYIPRFAHLLEFGEKNHEVSMTAL</original>
    <variation>DSLRPASFPTWGCDLGVVTRVVTGVYPRCLHASQWPVCAACPVRKFWSVG</variation>
    <location>
        <begin position="159"/>
        <end position="208"/>
    </location>
</feature>
<feature type="splice variant" id="VSP_043836" description="In isoform 6." evidence="10">
    <location>
        <begin position="209"/>
        <end position="677"/>
    </location>
</feature>
<feature type="splice variant" id="VSP_006400" description="In isoform 4." evidence="8">
    <location>
        <begin position="243"/>
        <end position="677"/>
    </location>
</feature>
<feature type="splice variant" id="VSP_006397" description="In isoform 2." evidence="8 10">
    <original>SYTAGQRKLRMKQLEQVLSKKLEEVEGEISSYQDAIEIELENSRPK</original>
    <variation>IEEGGQTEAREPPQASSWEGPSTTRRRSQLWHGCPGCGRGGFTLCP</variation>
    <location>
        <begin position="293"/>
        <end position="338"/>
    </location>
</feature>
<feature type="splice variant" id="VSP_006398" description="In isoform 2." evidence="8 10">
    <location>
        <begin position="339"/>
        <end position="677"/>
    </location>
</feature>
<feature type="splice variant" id="VSP_045046" description="In isoform 8." evidence="9">
    <original>R</original>
    <variation>RRDLSMPRCAKAKSQPHFPVLAQ</variation>
    <location>
        <position position="459"/>
    </location>
</feature>
<feature type="sequence variant" id="VAR_072710" description="In CFDS; dbSNP:rs370270828." evidence="7">
    <original>R</original>
    <variation>W</variation>
    <location>
        <position position="223"/>
    </location>
</feature>
<feature type="sequence variant" id="VAR_072711" description="In CFDS; dbSNP:rs606231416." evidence="7">
    <original>S</original>
    <variation>L</variation>
    <location>
        <position position="226"/>
    </location>
</feature>
<feature type="sequence variant" id="VAR_072712" description="In CFDS; dbSNP:rs373957300." evidence="7">
    <original>T</original>
    <variation>M</variation>
    <location>
        <position position="259"/>
    </location>
</feature>
<feature type="sequence variant" id="VAR_072713" description="In CFDS; dbSNP:rs606231450." evidence="7">
    <original>P</original>
    <variation>H</variation>
    <location>
        <position position="292"/>
    </location>
</feature>
<feature type="sequence variant" id="VAR_035723" description="In a colorectal cancer sample; somatic mutation; dbSNP:rs371981699." evidence="5">
    <original>V</original>
    <variation>M</variation>
    <location>
        <position position="542"/>
    </location>
</feature>
<feature type="sequence conflict" description="In Ref. 1; AAC50170." evidence="11" ref="1">
    <original>N</original>
    <variation>D</variation>
    <location>
        <position position="88"/>
    </location>
</feature>
<feature type="sequence conflict" description="In Ref. 1; AAC50170." evidence="11" ref="1">
    <original>D</original>
    <variation>V</variation>
    <location>
        <position position="151"/>
    </location>
</feature>
<feature type="sequence conflict" description="In Ref. 1; AAC50170." evidence="11" ref="1">
    <original>R</original>
    <variation>G</variation>
    <location>
        <position position="224"/>
    </location>
</feature>
<feature type="sequence conflict" description="In Ref. 1; AAC50170." evidence="11" ref="1">
    <original>A</original>
    <variation>G</variation>
    <location>
        <position position="231"/>
    </location>
</feature>
<feature type="sequence conflict" description="In Ref. 1; AAC50170." evidence="11" ref="1">
    <original>AK</original>
    <variation>R</variation>
    <location>
        <begin position="339"/>
        <end position="340"/>
    </location>
</feature>
<feature type="sequence conflict" description="In Ref. 4; BAH11919." evidence="11" ref="4">
    <original>D</original>
    <variation>N</variation>
    <location>
        <position position="437"/>
    </location>
</feature>
<feature type="sequence conflict" description="In Ref. 4; BAG53298." evidence="11" ref="4">
    <original>E</original>
    <variation>G</variation>
    <location>
        <position position="446"/>
    </location>
</feature>
<feature type="sequence conflict" description="In Ref. 1; AAC50170." evidence="11" ref="1">
    <original>P</original>
    <variation>T</variation>
    <location>
        <position position="594"/>
    </location>
</feature>
<feature type="sequence conflict" description="In Ref. 1; AAC50170." evidence="11" ref="1">
    <original>G</original>
    <variation>E</variation>
    <location>
        <position position="618"/>
    </location>
</feature>
<feature type="sequence conflict" description="In Ref. 4; BAG53298." evidence="11" ref="4">
    <original>E</original>
    <variation>G</variation>
    <location>
        <position position="640"/>
    </location>
</feature>
<protein>
    <recommendedName>
        <fullName>Transcription factor IIIB 90 kDa subunit</fullName>
        <shortName>TFIIIB90</shortName>
        <shortName>hTFIIIB90</shortName>
    </recommendedName>
    <alternativeName>
        <fullName>B-related factor 1</fullName>
        <shortName>BRF-1</shortName>
        <shortName>hBRF</shortName>
    </alternativeName>
    <alternativeName>
        <fullName>TAF3B2</fullName>
    </alternativeName>
    <alternativeName>
        <fullName>TATA box-binding protein-associated factor, RNA polymerase III, subunit 2</fullName>
    </alternativeName>
</protein>
<evidence type="ECO:0000250" key="1"/>
<evidence type="ECO:0000255" key="2">
    <source>
        <dbReference type="PROSITE-ProRule" id="PRU00469"/>
    </source>
</evidence>
<evidence type="ECO:0000256" key="3">
    <source>
        <dbReference type="SAM" id="MobiDB-lite"/>
    </source>
</evidence>
<evidence type="ECO:0000269" key="4">
    <source>
    </source>
</evidence>
<evidence type="ECO:0000269" key="5">
    <source>
    </source>
</evidence>
<evidence type="ECO:0000269" key="6">
    <source>
    </source>
</evidence>
<evidence type="ECO:0000269" key="7">
    <source>
    </source>
</evidence>
<evidence type="ECO:0000303" key="8">
    <source>
    </source>
</evidence>
<evidence type="ECO:0000303" key="9">
    <source>
    </source>
</evidence>
<evidence type="ECO:0000303" key="10">
    <source>
    </source>
</evidence>
<evidence type="ECO:0000305" key="11"/>
<evidence type="ECO:0007744" key="12">
    <source>
    </source>
</evidence>
<evidence type="ECO:0007744" key="13">
    <source>
    </source>
</evidence>
<evidence type="ECO:0007744" key="14">
    <source>
    </source>
</evidence>
<evidence type="ECO:0007744" key="15">
    <source>
    </source>
</evidence>
<evidence type="ECO:0007744" key="16">
    <source>
    </source>
</evidence>
<sequence>MTGRVCRGCGGTDIELDAARGDAVCTACGSVLEDNIIVSEVQFVESSGGGSSAVGQFVSLDGAGKTPTLGGGFHVNLGKESRAQTLQNGRRHIHHLGNQLQLNQHCLDTAFNFFKMAVSRHLTRGRKMAHVIAACLYLVCRTEGTPHMLLDLSDLLQVNVYVLGKTFLLLARELCINAPAIDPCLYIPRFAHLLEFGEKNHEVSMTALRLLQRMKRDWMHTGRRPSGLCGAALLVAARMHDFRRTVKEVISVVKVCESTLRKRLTEFEDTPTSQLTIDEFMKIDLEEECDPPSYTAGQRKLRMKQLEQVLSKKLEEVEGEISSYQDAIEIELENSRPKAKGGLASLAKDGSTEDTASSLCGEEDTEDEELEAAASHLNKDLYRELLGGAPGSSEAAGSPEWGGRPPALGSLLDPLPTAASLGISDSIRECISSQSSDPKDASGDGELDLSGIDDLEIDRYILNESEARVKAELWMRENAEYLREQREKEARIAKEKELGIYKEHKPKKSCKRREPIQASTAREAIEKMLEQKKISSKINYSVLRGLSSAGGGSPHREDAQPEHSASARKLSRRRTPASRSGADPVTSVGKRLRPLVSTQPAKKVATGEALLPSSPTLGAEPARPQAVLVESGPVSYHADEEADEEEPDEEDGEPCVSALQMMGSNDYGCDGDEDDGY</sequence>
<gene>
    <name type="primary">BRF1</name>
    <name type="synonym">BRF</name>
    <name type="synonym">GTF3B</name>
    <name type="synonym">TAF3B2</name>
    <name type="synonym">TAF3C</name>
</gene>
<reference key="1">
    <citation type="journal article" date="1995" name="Proc. Natl. Acad. Sci. U.S.A.">
        <title>Structure and function of a human transcription factor TFIIIB subunit that is evolutionarily conserved and contains both TFIIB- and high-mobility-group protein 2-related domains.</title>
        <authorList>
            <person name="Wang Z."/>
            <person name="Roeder R.G."/>
        </authorList>
    </citation>
    <scope>NUCLEOTIDE SEQUENCE [MRNA] (ISOFORM 1)</scope>
    <scope>PROTEIN SEQUENCE OF 264-281; 314-338; 441-469 AND 471-488</scope>
</reference>
<reference key="2">
    <citation type="journal article" date="1996" name="Mol. Cell. Biol.">
        <title>RNA polymerase III transcription from the human U6 and adenovirus type 2 VAI promoters has different requirements for human BRF, a subunit of human TFIIIB.</title>
        <authorList>
            <person name="Mital R."/>
            <person name="Kobayashi R."/>
            <person name="Hernandez N."/>
        </authorList>
    </citation>
    <scope>NUCLEOTIDE SEQUENCE [MRNA] (ISOFORM 1)</scope>
    <scope>PROTEIN SEQUENCE OF 248-254; 263-280; 313-320; 343-348; 380-396; 440-449; 471-488; 514-527; 538-561 AND 570-602</scope>
</reference>
<reference key="3">
    <citation type="journal article" date="2000" name="EMBO J.">
        <title>Alternatively spliced hBRF variants function at different RNA polymerase III promoters.</title>
        <authorList>
            <person name="McCulloch V."/>
            <person name="Hardin P."/>
            <person name="Peng W."/>
            <person name="Ruppert J.M."/>
            <person name="Lobo-Ruppert S.M."/>
        </authorList>
    </citation>
    <scope>NUCLEOTIDE SEQUENCE [MRNA] (ISOFORMS 2; 3 AND 4)</scope>
</reference>
<reference key="4">
    <citation type="journal article" date="2004" name="Nat. Genet.">
        <title>Complete sequencing and characterization of 21,243 full-length human cDNAs.</title>
        <authorList>
            <person name="Ota T."/>
            <person name="Suzuki Y."/>
            <person name="Nishikawa T."/>
            <person name="Otsuki T."/>
            <person name="Sugiyama T."/>
            <person name="Irie R."/>
            <person name="Wakamatsu A."/>
            <person name="Hayashi K."/>
            <person name="Sato H."/>
            <person name="Nagai K."/>
            <person name="Kimura K."/>
            <person name="Makita H."/>
            <person name="Sekine M."/>
            <person name="Obayashi M."/>
            <person name="Nishi T."/>
            <person name="Shibahara T."/>
            <person name="Tanaka T."/>
            <person name="Ishii S."/>
            <person name="Yamamoto J."/>
            <person name="Saito K."/>
            <person name="Kawai Y."/>
            <person name="Isono Y."/>
            <person name="Nakamura Y."/>
            <person name="Nagahari K."/>
            <person name="Murakami K."/>
            <person name="Yasuda T."/>
            <person name="Iwayanagi T."/>
            <person name="Wagatsuma M."/>
            <person name="Shiratori A."/>
            <person name="Sudo H."/>
            <person name="Hosoiri T."/>
            <person name="Kaku Y."/>
            <person name="Kodaira H."/>
            <person name="Kondo H."/>
            <person name="Sugawara M."/>
            <person name="Takahashi M."/>
            <person name="Kanda K."/>
            <person name="Yokoi T."/>
            <person name="Furuya T."/>
            <person name="Kikkawa E."/>
            <person name="Omura Y."/>
            <person name="Abe K."/>
            <person name="Kamihara K."/>
            <person name="Katsuta N."/>
            <person name="Sato K."/>
            <person name="Tanikawa M."/>
            <person name="Yamazaki M."/>
            <person name="Ninomiya K."/>
            <person name="Ishibashi T."/>
            <person name="Yamashita H."/>
            <person name="Murakawa K."/>
            <person name="Fujimori K."/>
            <person name="Tanai H."/>
            <person name="Kimata M."/>
            <person name="Watanabe M."/>
            <person name="Hiraoka S."/>
            <person name="Chiba Y."/>
            <person name="Ishida S."/>
            <person name="Ono Y."/>
            <person name="Takiguchi S."/>
            <person name="Watanabe S."/>
            <person name="Yosida M."/>
            <person name="Hotuta T."/>
            <person name="Kusano J."/>
            <person name="Kanehori K."/>
            <person name="Takahashi-Fujii A."/>
            <person name="Hara H."/>
            <person name="Tanase T.-O."/>
            <person name="Nomura Y."/>
            <person name="Togiya S."/>
            <person name="Komai F."/>
            <person name="Hara R."/>
            <person name="Takeuchi K."/>
            <person name="Arita M."/>
            <person name="Imose N."/>
            <person name="Musashino K."/>
            <person name="Yuuki H."/>
            <person name="Oshima A."/>
            <person name="Sasaki N."/>
            <person name="Aotsuka S."/>
            <person name="Yoshikawa Y."/>
            <person name="Matsunawa H."/>
            <person name="Ichihara T."/>
            <person name="Shiohata N."/>
            <person name="Sano S."/>
            <person name="Moriya S."/>
            <person name="Momiyama H."/>
            <person name="Satoh N."/>
            <person name="Takami S."/>
            <person name="Terashima Y."/>
            <person name="Suzuki O."/>
            <person name="Nakagawa S."/>
            <person name="Senoh A."/>
            <person name="Mizoguchi H."/>
            <person name="Goto Y."/>
            <person name="Shimizu F."/>
            <person name="Wakebe H."/>
            <person name="Hishigaki H."/>
            <person name="Watanabe T."/>
            <person name="Sugiyama A."/>
            <person name="Takemoto M."/>
            <person name="Kawakami B."/>
            <person name="Yamazaki M."/>
            <person name="Watanabe K."/>
            <person name="Kumagai A."/>
            <person name="Itakura S."/>
            <person name="Fukuzumi Y."/>
            <person name="Fujimori Y."/>
            <person name="Komiyama M."/>
            <person name="Tashiro H."/>
            <person name="Tanigami A."/>
            <person name="Fujiwara T."/>
            <person name="Ono T."/>
            <person name="Yamada K."/>
            <person name="Fujii Y."/>
            <person name="Ozaki K."/>
            <person name="Hirao M."/>
            <person name="Ohmori Y."/>
            <person name="Kawabata A."/>
            <person name="Hikiji T."/>
            <person name="Kobatake N."/>
            <person name="Inagaki H."/>
            <person name="Ikema Y."/>
            <person name="Okamoto S."/>
            <person name="Okitani R."/>
            <person name="Kawakami T."/>
            <person name="Noguchi S."/>
            <person name="Itoh T."/>
            <person name="Shigeta K."/>
            <person name="Senba T."/>
            <person name="Matsumura K."/>
            <person name="Nakajima Y."/>
            <person name="Mizuno T."/>
            <person name="Morinaga M."/>
            <person name="Sasaki M."/>
            <person name="Togashi T."/>
            <person name="Oyama M."/>
            <person name="Hata H."/>
            <person name="Watanabe M."/>
            <person name="Komatsu T."/>
            <person name="Mizushima-Sugano J."/>
            <person name="Satoh T."/>
            <person name="Shirai Y."/>
            <person name="Takahashi Y."/>
            <person name="Nakagawa K."/>
            <person name="Okumura K."/>
            <person name="Nagase T."/>
            <person name="Nomura N."/>
            <person name="Kikuchi H."/>
            <person name="Masuho Y."/>
            <person name="Yamashita R."/>
            <person name="Nakai K."/>
            <person name="Yada T."/>
            <person name="Nakamura Y."/>
            <person name="Ohara O."/>
            <person name="Isogai T."/>
            <person name="Sugano S."/>
        </authorList>
    </citation>
    <scope>NUCLEOTIDE SEQUENCE [LARGE SCALE MRNA] (ISOFORMS 7; 8 AND 9)</scope>
    <source>
        <tissue>Brain</tissue>
        <tissue>Hippocampus</tissue>
    </source>
</reference>
<reference key="5">
    <citation type="journal article" date="2003" name="Nature">
        <title>The DNA sequence and analysis of human chromosome 14.</title>
        <authorList>
            <person name="Heilig R."/>
            <person name="Eckenberg R."/>
            <person name="Petit J.-L."/>
            <person name="Fonknechten N."/>
            <person name="Da Silva C."/>
            <person name="Cattolico L."/>
            <person name="Levy M."/>
            <person name="Barbe V."/>
            <person name="De Berardinis V."/>
            <person name="Ureta-Vidal A."/>
            <person name="Pelletier E."/>
            <person name="Vico V."/>
            <person name="Anthouard V."/>
            <person name="Rowen L."/>
            <person name="Madan A."/>
            <person name="Qin S."/>
            <person name="Sun H."/>
            <person name="Du H."/>
            <person name="Pepin K."/>
            <person name="Artiguenave F."/>
            <person name="Robert C."/>
            <person name="Cruaud C."/>
            <person name="Bruels T."/>
            <person name="Jaillon O."/>
            <person name="Friedlander L."/>
            <person name="Samson G."/>
            <person name="Brottier P."/>
            <person name="Cure S."/>
            <person name="Segurens B."/>
            <person name="Aniere F."/>
            <person name="Samain S."/>
            <person name="Crespeau H."/>
            <person name="Abbasi N."/>
            <person name="Aiach N."/>
            <person name="Boscus D."/>
            <person name="Dickhoff R."/>
            <person name="Dors M."/>
            <person name="Dubois I."/>
            <person name="Friedman C."/>
            <person name="Gouyvenoux M."/>
            <person name="James R."/>
            <person name="Madan A."/>
            <person name="Mairey-Estrada B."/>
            <person name="Mangenot S."/>
            <person name="Martins N."/>
            <person name="Menard M."/>
            <person name="Oztas S."/>
            <person name="Ratcliffe A."/>
            <person name="Shaffer T."/>
            <person name="Trask B."/>
            <person name="Vacherie B."/>
            <person name="Bellemere C."/>
            <person name="Belser C."/>
            <person name="Besnard-Gonnet M."/>
            <person name="Bartol-Mavel D."/>
            <person name="Boutard M."/>
            <person name="Briez-Silla S."/>
            <person name="Combette S."/>
            <person name="Dufosse-Laurent V."/>
            <person name="Ferron C."/>
            <person name="Lechaplais C."/>
            <person name="Louesse C."/>
            <person name="Muselet D."/>
            <person name="Magdelenat G."/>
            <person name="Pateau E."/>
            <person name="Petit E."/>
            <person name="Sirvain-Trukniewicz P."/>
            <person name="Trybou A."/>
            <person name="Vega-Czarny N."/>
            <person name="Bataille E."/>
            <person name="Bluet E."/>
            <person name="Bordelais I."/>
            <person name="Dubois M."/>
            <person name="Dumont C."/>
            <person name="Guerin T."/>
            <person name="Haffray S."/>
            <person name="Hammadi R."/>
            <person name="Muanga J."/>
            <person name="Pellouin V."/>
            <person name="Robert D."/>
            <person name="Wunderle E."/>
            <person name="Gauguet G."/>
            <person name="Roy A."/>
            <person name="Sainte-Marthe L."/>
            <person name="Verdier J."/>
            <person name="Verdier-Discala C."/>
            <person name="Hillier L.W."/>
            <person name="Fulton L."/>
            <person name="McPherson J."/>
            <person name="Matsuda F."/>
            <person name="Wilson R."/>
            <person name="Scarpelli C."/>
            <person name="Gyapay G."/>
            <person name="Wincker P."/>
            <person name="Saurin W."/>
            <person name="Quetier F."/>
            <person name="Waterston R."/>
            <person name="Hood L."/>
            <person name="Weissenbach J."/>
        </authorList>
    </citation>
    <scope>NUCLEOTIDE SEQUENCE [LARGE SCALE GENOMIC DNA]</scope>
</reference>
<reference key="6">
    <citation type="submission" date="2005-07" db="EMBL/GenBank/DDBJ databases">
        <authorList>
            <person name="Mural R.J."/>
            <person name="Istrail S."/>
            <person name="Sutton G.G."/>
            <person name="Florea L."/>
            <person name="Halpern A.L."/>
            <person name="Mobarry C.M."/>
            <person name="Lippert R."/>
            <person name="Walenz B."/>
            <person name="Shatkay H."/>
            <person name="Dew I."/>
            <person name="Miller J.R."/>
            <person name="Flanigan M.J."/>
            <person name="Edwards N.J."/>
            <person name="Bolanos R."/>
            <person name="Fasulo D."/>
            <person name="Halldorsson B.V."/>
            <person name="Hannenhalli S."/>
            <person name="Turner R."/>
            <person name="Yooseph S."/>
            <person name="Lu F."/>
            <person name="Nusskern D.R."/>
            <person name="Shue B.C."/>
            <person name="Zheng X.H."/>
            <person name="Zhong F."/>
            <person name="Delcher A.L."/>
            <person name="Huson D.H."/>
            <person name="Kravitz S.A."/>
            <person name="Mouchard L."/>
            <person name="Reinert K."/>
            <person name="Remington K.A."/>
            <person name="Clark A.G."/>
            <person name="Waterman M.S."/>
            <person name="Eichler E.E."/>
            <person name="Adams M.D."/>
            <person name="Hunkapiller M.W."/>
            <person name="Myers E.W."/>
            <person name="Venter J.C."/>
        </authorList>
    </citation>
    <scope>NUCLEOTIDE SEQUENCE [LARGE SCALE GENOMIC DNA]</scope>
</reference>
<reference key="7">
    <citation type="journal article" date="2004" name="Genome Res.">
        <title>The status, quality, and expansion of the NIH full-length cDNA project: the Mammalian Gene Collection (MGC).</title>
        <authorList>
            <consortium name="The MGC Project Team"/>
        </authorList>
    </citation>
    <scope>NUCLEOTIDE SEQUENCE [LARGE SCALE MRNA] (ISOFORMS 2; 5 AND 6)</scope>
    <source>
        <tissue>Brain</tissue>
        <tissue>Skin</tissue>
        <tissue>Testis</tissue>
    </source>
</reference>
<reference key="8">
    <citation type="journal article" date="2003" name="EMBO J.">
        <title>TFIIIB is phosphorylated, disrupted and selectively released from tRNA promoters during mitosis in vivo.</title>
        <authorList>
            <person name="Fairley J.A."/>
            <person name="Scott P.H."/>
            <person name="White R.J."/>
        </authorList>
    </citation>
    <scope>INTERACTION WITH BDP1</scope>
</reference>
<reference key="9">
    <citation type="journal article" date="2006" name="Cell">
        <title>Global, in vivo, and site-specific phosphorylation dynamics in signaling networks.</title>
        <authorList>
            <person name="Olsen J.V."/>
            <person name="Blagoev B."/>
            <person name="Gnad F."/>
            <person name="Macek B."/>
            <person name="Kumar C."/>
            <person name="Mortensen P."/>
            <person name="Mann M."/>
        </authorList>
    </citation>
    <scope>PHOSPHORYLATION [LARGE SCALE ANALYSIS] AT SER-553</scope>
    <scope>IDENTIFICATION BY MASS SPECTROMETRY [LARGE SCALE ANALYSIS]</scope>
    <source>
        <tissue>Cervix carcinoma</tissue>
    </source>
</reference>
<reference key="10">
    <citation type="journal article" date="2008" name="Proc. Natl. Acad. Sci. U.S.A.">
        <title>A quantitative atlas of mitotic phosphorylation.</title>
        <authorList>
            <person name="Dephoure N."/>
            <person name="Zhou C."/>
            <person name="Villen J."/>
            <person name="Beausoleil S.A."/>
            <person name="Bakalarski C.E."/>
            <person name="Elledge S.J."/>
            <person name="Gygi S.P."/>
        </authorList>
    </citation>
    <scope>PHOSPHORYLATION [LARGE SCALE ANALYSIS] AT THR-365 AND SER-450</scope>
    <scope>IDENTIFICATION BY MASS SPECTROMETRY [LARGE SCALE ANALYSIS]</scope>
    <source>
        <tissue>Cervix carcinoma</tissue>
    </source>
</reference>
<reference key="11">
    <citation type="journal article" date="2008" name="J. Mol. Biol.">
        <title>Regulation of RNA polymerase III transcription by Maf1 in mammalian cells.</title>
        <authorList>
            <person name="Goodfellow S.J."/>
            <person name="Graham E.L."/>
            <person name="Kantidakis T."/>
            <person name="Marshall L."/>
            <person name="Coppins B.A."/>
            <person name="Oficjalska-Pham D."/>
            <person name="Gerard M."/>
            <person name="Lefebvre O."/>
            <person name="White R.J."/>
        </authorList>
    </citation>
    <scope>INTERACTION WITH MAF1</scope>
</reference>
<reference key="12">
    <citation type="journal article" date="2009" name="Sci. Signal.">
        <title>Quantitative phosphoproteomic analysis of T cell receptor signaling reveals system-wide modulation of protein-protein interactions.</title>
        <authorList>
            <person name="Mayya V."/>
            <person name="Lundgren D.H."/>
            <person name="Hwang S.-I."/>
            <person name="Rezaul K."/>
            <person name="Wu L."/>
            <person name="Eng J.K."/>
            <person name="Rodionov V."/>
            <person name="Han D.K."/>
        </authorList>
    </citation>
    <scope>PHOSPHORYLATION [LARGE SCALE ANALYSIS] AT THR-365</scope>
    <scope>IDENTIFICATION BY MASS SPECTROMETRY [LARGE SCALE ANALYSIS]</scope>
    <source>
        <tissue>Leukemic T-cell</tissue>
    </source>
</reference>
<reference key="13">
    <citation type="journal article" date="2013" name="J. Proteome Res.">
        <title>Toward a comprehensive characterization of a human cancer cell phosphoproteome.</title>
        <authorList>
            <person name="Zhou H."/>
            <person name="Di Palma S."/>
            <person name="Preisinger C."/>
            <person name="Peng M."/>
            <person name="Polat A.N."/>
            <person name="Heck A.J."/>
            <person name="Mohammed S."/>
        </authorList>
    </citation>
    <scope>PHOSPHORYLATION [LARGE SCALE ANALYSIS] AT SER-553</scope>
    <scope>IDENTIFICATION BY MASS SPECTROMETRY [LARGE SCALE ANALYSIS]</scope>
    <source>
        <tissue>Cervix carcinoma</tissue>
        <tissue>Erythroleukemia</tissue>
    </source>
</reference>
<reference key="14">
    <citation type="journal article" date="2014" name="J. Proteomics">
        <title>An enzyme assisted RP-RPLC approach for in-depth analysis of human liver phosphoproteome.</title>
        <authorList>
            <person name="Bian Y."/>
            <person name="Song C."/>
            <person name="Cheng K."/>
            <person name="Dong M."/>
            <person name="Wang F."/>
            <person name="Huang J."/>
            <person name="Sun D."/>
            <person name="Wang L."/>
            <person name="Ye M."/>
            <person name="Zou H."/>
        </authorList>
    </citation>
    <scope>PHOSPHORYLATION [LARGE SCALE ANALYSIS] AT SER-553</scope>
    <scope>IDENTIFICATION BY MASS SPECTROMETRY [LARGE SCALE ANALYSIS]</scope>
    <source>
        <tissue>Liver</tissue>
    </source>
</reference>
<reference key="15">
    <citation type="journal article" date="2015" name="Genome Res.">
        <title>BRF1 mutations alter RNA polymerase III-dependent transcription and cause neurodevelopmental anomalies.</title>
        <authorList>
            <person name="Borck G."/>
            <person name="Hog F."/>
            <person name="Dentici M.L."/>
            <person name="Tan P.L."/>
            <person name="Sowada N."/>
            <person name="Medeira A."/>
            <person name="Gueneau L."/>
            <person name="Thiele H."/>
            <person name="Kousi M."/>
            <person name="Lepri F."/>
            <person name="Wenzeck L."/>
            <person name="Blumenthal I."/>
            <person name="Radicioni A."/>
            <person name="Schwarzenberg T.L."/>
            <person name="Mandriani B."/>
            <person name="Fischetto R."/>
            <person name="Morris-Rosendahl D.J."/>
            <person name="Altmuller J."/>
            <person name="Reymond A."/>
            <person name="Nurnberg P."/>
            <person name="Merla G."/>
            <person name="Dallapiccola B."/>
            <person name="Katsanis N."/>
            <person name="Cramer P."/>
            <person name="Kubisch C."/>
        </authorList>
    </citation>
    <scope>INVOLVEMENT IN CFDS</scope>
    <scope>VARIANTS CFDS TRP-223; LEU-226; MET-259 AND HIS-292</scope>
</reference>
<reference key="16">
    <citation type="journal article" date="2006" name="Science">
        <title>The consensus coding sequences of human breast and colorectal cancers.</title>
        <authorList>
            <person name="Sjoeblom T."/>
            <person name="Jones S."/>
            <person name="Wood L.D."/>
            <person name="Parsons D.W."/>
            <person name="Lin J."/>
            <person name="Barber T.D."/>
            <person name="Mandelker D."/>
            <person name="Leary R.J."/>
            <person name="Ptak J."/>
            <person name="Silliman N."/>
            <person name="Szabo S."/>
            <person name="Buckhaults P."/>
            <person name="Farrell C."/>
            <person name="Meeh P."/>
            <person name="Markowitz S.D."/>
            <person name="Willis J."/>
            <person name="Dawson D."/>
            <person name="Willson J.K.V."/>
            <person name="Gazdar A.F."/>
            <person name="Hartigan J."/>
            <person name="Wu L."/>
            <person name="Liu C."/>
            <person name="Parmigiani G."/>
            <person name="Park B.H."/>
            <person name="Bachman K.E."/>
            <person name="Papadopoulos N."/>
            <person name="Vogelstein B."/>
            <person name="Kinzler K.W."/>
            <person name="Velculescu V.E."/>
        </authorList>
    </citation>
    <scope>VARIANT [LARGE SCALE ANALYSIS] MET-542</scope>
</reference>
<name>TF3B_HUMAN</name>
<dbReference type="EMBL" id="U28838">
    <property type="protein sequence ID" value="AAC50170.1"/>
    <property type="status" value="ALT_FRAME"/>
    <property type="molecule type" value="mRNA"/>
</dbReference>
<dbReference type="EMBL" id="U75276">
    <property type="protein sequence ID" value="AAB38876.1"/>
    <property type="molecule type" value="mRNA"/>
</dbReference>
<dbReference type="EMBL" id="AJ297406">
    <property type="protein sequence ID" value="CAC04512.1"/>
    <property type="molecule type" value="mRNA"/>
</dbReference>
<dbReference type="EMBL" id="AJ297407">
    <property type="protein sequence ID" value="CAC04513.1"/>
    <property type="molecule type" value="mRNA"/>
</dbReference>
<dbReference type="EMBL" id="AJ297408">
    <property type="protein sequence ID" value="CAC04514.1"/>
    <property type="molecule type" value="mRNA"/>
</dbReference>
<dbReference type="EMBL" id="AK096471">
    <property type="protein sequence ID" value="BAG53298.1"/>
    <property type="molecule type" value="mRNA"/>
</dbReference>
<dbReference type="EMBL" id="AK294899">
    <property type="protein sequence ID" value="BAH11919.1"/>
    <property type="molecule type" value="mRNA"/>
</dbReference>
<dbReference type="EMBL" id="AK295579">
    <property type="protein sequence ID" value="BAG58477.1"/>
    <property type="molecule type" value="mRNA"/>
</dbReference>
<dbReference type="EMBL" id="AL512355">
    <property type="status" value="NOT_ANNOTATED_CDS"/>
    <property type="molecule type" value="Genomic_DNA"/>
</dbReference>
<dbReference type="EMBL" id="CH471061">
    <property type="protein sequence ID" value="EAW81908.1"/>
    <property type="molecule type" value="Genomic_DNA"/>
</dbReference>
<dbReference type="EMBL" id="CH471061">
    <property type="protein sequence ID" value="EAW81911.1"/>
    <property type="molecule type" value="Genomic_DNA"/>
</dbReference>
<dbReference type="EMBL" id="BC016743">
    <property type="protein sequence ID" value="AAH16743.1"/>
    <property type="molecule type" value="mRNA"/>
</dbReference>
<dbReference type="EMBL" id="BC071637">
    <property type="protein sequence ID" value="AAH71637.1"/>
    <property type="molecule type" value="mRNA"/>
</dbReference>
<dbReference type="EMBL" id="BC086856">
    <property type="protein sequence ID" value="AAH86856.1"/>
    <property type="molecule type" value="mRNA"/>
</dbReference>
<dbReference type="EMBL" id="BC103859">
    <property type="protein sequence ID" value="AAI03860.1"/>
    <property type="molecule type" value="mRNA"/>
</dbReference>
<dbReference type="CCDS" id="CCDS10001.1">
    <molecule id="Q92994-1"/>
</dbReference>
<dbReference type="CCDS" id="CCDS42001.1">
    <molecule id="Q92994-3"/>
</dbReference>
<dbReference type="CCDS" id="CCDS55949.1">
    <molecule id="Q92994-9"/>
</dbReference>
<dbReference type="CCDS" id="CCDS55950.1">
    <molecule id="Q92994-7"/>
</dbReference>
<dbReference type="CCDS" id="CCDS55951.1">
    <molecule id="Q92994-8"/>
</dbReference>
<dbReference type="CCDS" id="CCDS55952.1">
    <molecule id="Q92994-5"/>
</dbReference>
<dbReference type="CCDS" id="CCDS55953.1">
    <molecule id="Q92994-6"/>
</dbReference>
<dbReference type="PIR" id="I39065">
    <property type="entry name" value="I39065"/>
</dbReference>
<dbReference type="RefSeq" id="NP_001229715.1">
    <molecule id="Q92994-8"/>
    <property type="nucleotide sequence ID" value="NM_001242786.2"/>
</dbReference>
<dbReference type="RefSeq" id="NP_001229716.1">
    <molecule id="Q92994-7"/>
    <property type="nucleotide sequence ID" value="NM_001242787.2"/>
</dbReference>
<dbReference type="RefSeq" id="NP_001229717.1">
    <molecule id="Q92994-5"/>
    <property type="nucleotide sequence ID" value="NM_001242788.2"/>
</dbReference>
<dbReference type="RefSeq" id="NP_001229718.1">
    <molecule id="Q92994-9"/>
    <property type="nucleotide sequence ID" value="NM_001242789.2"/>
</dbReference>
<dbReference type="RefSeq" id="NP_001229719.1">
    <molecule id="Q92994-6"/>
    <property type="nucleotide sequence ID" value="NM_001242790.2"/>
</dbReference>
<dbReference type="RefSeq" id="NP_001510.2">
    <molecule id="Q92994-1"/>
    <property type="nucleotide sequence ID" value="NM_001519.3"/>
</dbReference>
<dbReference type="RefSeq" id="NP_663718.1">
    <molecule id="Q92994-3"/>
    <property type="nucleotide sequence ID" value="NM_145685.3"/>
</dbReference>
<dbReference type="RefSeq" id="XP_005267620.1">
    <molecule id="Q92994-3"/>
    <property type="nucleotide sequence ID" value="XM_005267563.5"/>
</dbReference>
<dbReference type="RefSeq" id="XP_024305321.1">
    <molecule id="Q92994-9"/>
    <property type="nucleotide sequence ID" value="XM_024449553.2"/>
</dbReference>
<dbReference type="RefSeq" id="XP_054231892.1">
    <molecule id="Q92994-3"/>
    <property type="nucleotide sequence ID" value="XM_054375917.1"/>
</dbReference>
<dbReference type="RefSeq" id="XP_054231895.1">
    <molecule id="Q92994-9"/>
    <property type="nucleotide sequence ID" value="XM_054375920.1"/>
</dbReference>
<dbReference type="SMR" id="Q92994"/>
<dbReference type="BioGRID" id="109227">
    <property type="interactions" value="98"/>
</dbReference>
<dbReference type="ComplexPortal" id="CPX-2396">
    <property type="entry name" value="General transcription factor TFIII3B complex, BRF1 variant"/>
</dbReference>
<dbReference type="CORUM" id="Q92994"/>
<dbReference type="FunCoup" id="Q92994">
    <property type="interactions" value="1167"/>
</dbReference>
<dbReference type="IntAct" id="Q92994">
    <property type="interactions" value="24"/>
</dbReference>
<dbReference type="MINT" id="Q92994"/>
<dbReference type="STRING" id="9606.ENSP00000448387"/>
<dbReference type="ChEMBL" id="CHEMBL4523421"/>
<dbReference type="GlyGen" id="Q92994">
    <property type="glycosylation" value="1 site, 1 O-linked glycan (1 site)"/>
</dbReference>
<dbReference type="iPTMnet" id="Q92994"/>
<dbReference type="PhosphoSitePlus" id="Q92994"/>
<dbReference type="BioMuta" id="BRF1"/>
<dbReference type="DMDM" id="20455319"/>
<dbReference type="jPOST" id="Q92994"/>
<dbReference type="MassIVE" id="Q92994"/>
<dbReference type="PaxDb" id="9606-ENSP00000448323"/>
<dbReference type="PeptideAtlas" id="Q92994"/>
<dbReference type="ProteomicsDB" id="27032"/>
<dbReference type="ProteomicsDB" id="30432"/>
<dbReference type="ProteomicsDB" id="75658">
    <molecule id="Q92994-1"/>
</dbReference>
<dbReference type="ProteomicsDB" id="75659">
    <molecule id="Q92994-2"/>
</dbReference>
<dbReference type="ProteomicsDB" id="75660">
    <molecule id="Q92994-3"/>
</dbReference>
<dbReference type="ProteomicsDB" id="75661">
    <molecule id="Q92994-4"/>
</dbReference>
<dbReference type="ProteomicsDB" id="75662">
    <molecule id="Q92994-5"/>
</dbReference>
<dbReference type="ProteomicsDB" id="75663">
    <molecule id="Q92994-6"/>
</dbReference>
<dbReference type="Pumba" id="Q92994"/>
<dbReference type="Antibodypedia" id="14980">
    <property type="antibodies" value="254 antibodies from 29 providers"/>
</dbReference>
<dbReference type="DNASU" id="2972"/>
<dbReference type="Ensembl" id="ENST00000327359.7">
    <molecule id="Q92994-7"/>
    <property type="protein sequence ID" value="ENSP00000329029.3"/>
    <property type="gene ID" value="ENSG00000185024.18"/>
</dbReference>
<dbReference type="Ensembl" id="ENST00000379937.6">
    <molecule id="Q92994-5"/>
    <property type="protein sequence ID" value="ENSP00000369269.2"/>
    <property type="gene ID" value="ENSG00000185024.18"/>
</dbReference>
<dbReference type="Ensembl" id="ENST00000392557.8">
    <molecule id="Q92994-3"/>
    <property type="protein sequence ID" value="ENSP00000376340.4"/>
    <property type="gene ID" value="ENSG00000185024.18"/>
</dbReference>
<dbReference type="Ensembl" id="ENST00000440513.7">
    <molecule id="Q92994-8"/>
    <property type="protein sequence ID" value="ENSP00000388877.3"/>
    <property type="gene ID" value="ENSG00000185024.18"/>
</dbReference>
<dbReference type="Ensembl" id="ENST00000446501.6">
    <molecule id="Q92994-9"/>
    <property type="protein sequence ID" value="ENSP00000389859.2"/>
    <property type="gene ID" value="ENSG00000185024.18"/>
</dbReference>
<dbReference type="Ensembl" id="ENST00000547530.7">
    <molecule id="Q92994-1"/>
    <property type="protein sequence ID" value="ENSP00000448387.2"/>
    <property type="gene ID" value="ENSG00000185024.18"/>
</dbReference>
<dbReference type="Ensembl" id="ENST00000548421.2">
    <molecule id="Q92994-6"/>
    <property type="protein sequence ID" value="ENSP00000446707.1"/>
    <property type="gene ID" value="ENSG00000185024.18"/>
</dbReference>
<dbReference type="GeneID" id="2972"/>
<dbReference type="KEGG" id="hsa:2972"/>
<dbReference type="MANE-Select" id="ENST00000547530.7">
    <property type="protein sequence ID" value="ENSP00000448387.2"/>
    <property type="RefSeq nucleotide sequence ID" value="NM_001519.4"/>
    <property type="RefSeq protein sequence ID" value="NP_001510.2"/>
</dbReference>
<dbReference type="UCSC" id="uc001yql.3">
    <molecule id="Q92994-1"/>
    <property type="organism name" value="human"/>
</dbReference>
<dbReference type="AGR" id="HGNC:11551"/>
<dbReference type="CTD" id="2972"/>
<dbReference type="DisGeNET" id="2972"/>
<dbReference type="GeneCards" id="BRF1"/>
<dbReference type="HGNC" id="HGNC:11551">
    <property type="gene designation" value="BRF1"/>
</dbReference>
<dbReference type="HPA" id="ENSG00000185024">
    <property type="expression patterns" value="Low tissue specificity"/>
</dbReference>
<dbReference type="MalaCards" id="BRF1"/>
<dbReference type="MIM" id="604902">
    <property type="type" value="gene"/>
</dbReference>
<dbReference type="MIM" id="616202">
    <property type="type" value="phenotype"/>
</dbReference>
<dbReference type="neXtProt" id="NX_Q92994"/>
<dbReference type="OpenTargets" id="ENSG00000185024"/>
<dbReference type="Orphanet" id="444072">
    <property type="disease" value="Cerebellar-facial-dental syndrome"/>
</dbReference>
<dbReference type="PharmGKB" id="PA164741296"/>
<dbReference type="VEuPathDB" id="HostDB:ENSG00000185024"/>
<dbReference type="eggNOG" id="KOG1598">
    <property type="taxonomic scope" value="Eukaryota"/>
</dbReference>
<dbReference type="GeneTree" id="ENSGT00390000010349"/>
<dbReference type="HOGENOM" id="CLU_010293_2_3_1"/>
<dbReference type="InParanoid" id="Q92994"/>
<dbReference type="OMA" id="EPPCKVM"/>
<dbReference type="OrthoDB" id="511529at2759"/>
<dbReference type="PAN-GO" id="Q92994">
    <property type="GO annotations" value="7 GO annotations based on evolutionary models"/>
</dbReference>
<dbReference type="PhylomeDB" id="Q92994"/>
<dbReference type="TreeFam" id="TF324046"/>
<dbReference type="PathwayCommons" id="Q92994"/>
<dbReference type="Reactome" id="R-HSA-749476">
    <property type="pathway name" value="RNA Polymerase III Abortive And Retractive Initiation"/>
</dbReference>
<dbReference type="Reactome" id="R-HSA-76061">
    <property type="pathway name" value="RNA Polymerase III Transcription Initiation From Type 1 Promoter"/>
</dbReference>
<dbReference type="Reactome" id="R-HSA-76066">
    <property type="pathway name" value="RNA Polymerase III Transcription Initiation From Type 2 Promoter"/>
</dbReference>
<dbReference type="SignaLink" id="Q92994"/>
<dbReference type="SIGNOR" id="Q92994"/>
<dbReference type="BioGRID-ORCS" id="2972">
    <property type="hits" value="799 hits in 1161 CRISPR screens"/>
</dbReference>
<dbReference type="CD-CODE" id="DEE660B4">
    <property type="entry name" value="Stress granule"/>
</dbReference>
<dbReference type="ChiTaRS" id="BRF1">
    <property type="organism name" value="human"/>
</dbReference>
<dbReference type="GeneWiki" id="BRF1_(gene)"/>
<dbReference type="GenomeRNAi" id="2972"/>
<dbReference type="Pharos" id="Q92994">
    <property type="development level" value="Tbio"/>
</dbReference>
<dbReference type="PRO" id="PR:Q92994"/>
<dbReference type="Proteomes" id="UP000005640">
    <property type="component" value="Chromosome 14"/>
</dbReference>
<dbReference type="RNAct" id="Q92994">
    <property type="molecule type" value="protein"/>
</dbReference>
<dbReference type="Bgee" id="ENSG00000185024">
    <property type="expression patterns" value="Expressed in sural nerve and 129 other cell types or tissues"/>
</dbReference>
<dbReference type="ExpressionAtlas" id="Q92994">
    <property type="expression patterns" value="baseline and differential"/>
</dbReference>
<dbReference type="GO" id="GO:0005654">
    <property type="term" value="C:nucleoplasm"/>
    <property type="evidence" value="ECO:0000304"/>
    <property type="project" value="Reactome"/>
</dbReference>
<dbReference type="GO" id="GO:0005634">
    <property type="term" value="C:nucleus"/>
    <property type="evidence" value="ECO:0000318"/>
    <property type="project" value="GO_Central"/>
</dbReference>
<dbReference type="GO" id="GO:0000126">
    <property type="term" value="C:transcription factor TFIIIB complex"/>
    <property type="evidence" value="ECO:0000318"/>
    <property type="project" value="GO_Central"/>
</dbReference>
<dbReference type="GO" id="GO:0097550">
    <property type="term" value="C:transcription preinitiation complex"/>
    <property type="evidence" value="ECO:0000318"/>
    <property type="project" value="GO_Central"/>
</dbReference>
<dbReference type="GO" id="GO:0000995">
    <property type="term" value="F:RNA polymerase III general transcription initiation factor activity"/>
    <property type="evidence" value="ECO:0000318"/>
    <property type="project" value="GO_Central"/>
</dbReference>
<dbReference type="GO" id="GO:0001006">
    <property type="term" value="F:RNA polymerase III type 3 promoter sequence-specific DNA binding"/>
    <property type="evidence" value="ECO:0000318"/>
    <property type="project" value="GO_Central"/>
</dbReference>
<dbReference type="GO" id="GO:0017025">
    <property type="term" value="F:TBP-class protein binding"/>
    <property type="evidence" value="ECO:0007669"/>
    <property type="project" value="InterPro"/>
</dbReference>
<dbReference type="GO" id="GO:0008270">
    <property type="term" value="F:zinc ion binding"/>
    <property type="evidence" value="ECO:0007669"/>
    <property type="project" value="UniProtKB-KW"/>
</dbReference>
<dbReference type="GO" id="GO:0006352">
    <property type="term" value="P:DNA-templated transcription initiation"/>
    <property type="evidence" value="ECO:0000318"/>
    <property type="project" value="GO_Central"/>
</dbReference>
<dbReference type="GO" id="GO:0009303">
    <property type="term" value="P:rRNA transcription"/>
    <property type="evidence" value="ECO:0000304"/>
    <property type="project" value="ProtInc"/>
</dbReference>
<dbReference type="GO" id="GO:0006383">
    <property type="term" value="P:transcription by RNA polymerase III"/>
    <property type="evidence" value="ECO:0000318"/>
    <property type="project" value="GO_Central"/>
</dbReference>
<dbReference type="GO" id="GO:0006384">
    <property type="term" value="P:transcription initiation at RNA polymerase III promoter"/>
    <property type="evidence" value="ECO:0000304"/>
    <property type="project" value="ProtInc"/>
</dbReference>
<dbReference type="GO" id="GO:0070897">
    <property type="term" value="P:transcription preinitiation complex assembly"/>
    <property type="evidence" value="ECO:0007669"/>
    <property type="project" value="InterPro"/>
</dbReference>
<dbReference type="GO" id="GO:0009304">
    <property type="term" value="P:tRNA transcription"/>
    <property type="evidence" value="ECO:0000304"/>
    <property type="project" value="ProtInc"/>
</dbReference>
<dbReference type="CDD" id="cd20553">
    <property type="entry name" value="CYCLIN_TFIIIB90_rpt1"/>
    <property type="match status" value="1"/>
</dbReference>
<dbReference type="CDD" id="cd20554">
    <property type="entry name" value="CYCLIN_TFIIIB90_rpt2"/>
    <property type="match status" value="1"/>
</dbReference>
<dbReference type="FunFam" id="2.20.25.10:FF:000012">
    <property type="entry name" value="Putative transcription factor IIIB 90 kDa subunit"/>
    <property type="match status" value="1"/>
</dbReference>
<dbReference type="FunFam" id="1.10.472.10:FF:000002">
    <property type="entry name" value="Transcription factor IIIB 90 kDa subunit"/>
    <property type="match status" value="1"/>
</dbReference>
<dbReference type="FunFam" id="1.10.472.10:FF:000007">
    <property type="entry name" value="Transcription factor IIIB 90 kDa subunit"/>
    <property type="match status" value="1"/>
</dbReference>
<dbReference type="FunFam" id="1.20.5.650:FF:000001">
    <property type="entry name" value="transcription factor IIIB 90 kDa subunit isoform X2"/>
    <property type="match status" value="1"/>
</dbReference>
<dbReference type="Gene3D" id="2.20.25.10">
    <property type="match status" value="1"/>
</dbReference>
<dbReference type="Gene3D" id="1.10.472.10">
    <property type="entry name" value="Cyclin-like"/>
    <property type="match status" value="2"/>
</dbReference>
<dbReference type="Gene3D" id="1.20.5.650">
    <property type="entry name" value="Single helix bin"/>
    <property type="match status" value="1"/>
</dbReference>
<dbReference type="InterPro" id="IPR011665">
    <property type="entry name" value="BRF1_TBP-bd_dom"/>
</dbReference>
<dbReference type="InterPro" id="IPR013763">
    <property type="entry name" value="Cyclin-like_dom"/>
</dbReference>
<dbReference type="InterPro" id="IPR036915">
    <property type="entry name" value="Cyclin-like_sf"/>
</dbReference>
<dbReference type="InterPro" id="IPR000812">
    <property type="entry name" value="TFIIB"/>
</dbReference>
<dbReference type="InterPro" id="IPR013150">
    <property type="entry name" value="TFIIB_cyclin"/>
</dbReference>
<dbReference type="InterPro" id="IPR013137">
    <property type="entry name" value="Znf_TFIIB"/>
</dbReference>
<dbReference type="PANTHER" id="PTHR11618:SF4">
    <property type="entry name" value="TRANSCRIPTION FACTOR IIIB 90 KDA SUBUNIT"/>
    <property type="match status" value="1"/>
</dbReference>
<dbReference type="PANTHER" id="PTHR11618">
    <property type="entry name" value="TRANSCRIPTION INITIATION FACTOR IIB-RELATED"/>
    <property type="match status" value="1"/>
</dbReference>
<dbReference type="Pfam" id="PF07741">
    <property type="entry name" value="BRF1"/>
    <property type="match status" value="1"/>
</dbReference>
<dbReference type="Pfam" id="PF00382">
    <property type="entry name" value="TFIIB"/>
    <property type="match status" value="2"/>
</dbReference>
<dbReference type="Pfam" id="PF08271">
    <property type="entry name" value="Zn_Ribbon_TF"/>
    <property type="match status" value="1"/>
</dbReference>
<dbReference type="PRINTS" id="PR00685">
    <property type="entry name" value="TIFACTORIIB"/>
</dbReference>
<dbReference type="SMART" id="SM00385">
    <property type="entry name" value="CYCLIN"/>
    <property type="match status" value="2"/>
</dbReference>
<dbReference type="SUPFAM" id="SSF47954">
    <property type="entry name" value="Cyclin-like"/>
    <property type="match status" value="2"/>
</dbReference>
<dbReference type="SUPFAM" id="SSF57783">
    <property type="entry name" value="Zinc beta-ribbon"/>
    <property type="match status" value="1"/>
</dbReference>
<dbReference type="PROSITE" id="PS51134">
    <property type="entry name" value="ZF_TFIIB"/>
    <property type="match status" value="1"/>
</dbReference>
<organism>
    <name type="scientific">Homo sapiens</name>
    <name type="common">Human</name>
    <dbReference type="NCBI Taxonomy" id="9606"/>
    <lineage>
        <taxon>Eukaryota</taxon>
        <taxon>Metazoa</taxon>
        <taxon>Chordata</taxon>
        <taxon>Craniata</taxon>
        <taxon>Vertebrata</taxon>
        <taxon>Euteleostomi</taxon>
        <taxon>Mammalia</taxon>
        <taxon>Eutheria</taxon>
        <taxon>Euarchontoglires</taxon>
        <taxon>Primates</taxon>
        <taxon>Haplorrhini</taxon>
        <taxon>Catarrhini</taxon>
        <taxon>Hominidae</taxon>
        <taxon>Homo</taxon>
    </lineage>
</organism>